<geneLocation type="chloroplast"/>
<dbReference type="EC" id="7.1.1.-" evidence="1"/>
<dbReference type="EMBL" id="DQ231562">
    <property type="protein sequence ID" value="ABB90097.1"/>
    <property type="molecule type" value="Genomic_DNA"/>
</dbReference>
<dbReference type="EMBL" id="DQ386163">
    <property type="protein sequence ID" value="ABD47117.1"/>
    <property type="molecule type" value="Genomic_DNA"/>
</dbReference>
<dbReference type="SMR" id="P0CD49"/>
<dbReference type="FunCoup" id="P0CD49">
    <property type="interactions" value="19"/>
</dbReference>
<dbReference type="STRING" id="4113.P0CD49"/>
<dbReference type="KEGG" id="sot:4099891"/>
<dbReference type="KEGG" id="sot:4099922"/>
<dbReference type="InParanoid" id="P0CD49"/>
<dbReference type="OrthoDB" id="1712451at2759"/>
<dbReference type="Proteomes" id="UP000011115">
    <property type="component" value="Unassembled WGS sequence"/>
</dbReference>
<dbReference type="ExpressionAtlas" id="P0CD49">
    <property type="expression patterns" value="baseline"/>
</dbReference>
<dbReference type="GO" id="GO:0009535">
    <property type="term" value="C:chloroplast thylakoid membrane"/>
    <property type="evidence" value="ECO:0007669"/>
    <property type="project" value="UniProtKB-SubCell"/>
</dbReference>
<dbReference type="GO" id="GO:0008137">
    <property type="term" value="F:NADH dehydrogenase (ubiquinone) activity"/>
    <property type="evidence" value="ECO:0007669"/>
    <property type="project" value="InterPro"/>
</dbReference>
<dbReference type="GO" id="GO:0048038">
    <property type="term" value="F:quinone binding"/>
    <property type="evidence" value="ECO:0007669"/>
    <property type="project" value="UniProtKB-KW"/>
</dbReference>
<dbReference type="GO" id="GO:0042773">
    <property type="term" value="P:ATP synthesis coupled electron transport"/>
    <property type="evidence" value="ECO:0007669"/>
    <property type="project" value="InterPro"/>
</dbReference>
<dbReference type="GO" id="GO:0019684">
    <property type="term" value="P:photosynthesis, light reaction"/>
    <property type="evidence" value="ECO:0007669"/>
    <property type="project" value="UniProtKB-UniRule"/>
</dbReference>
<dbReference type="HAMAP" id="MF_00445">
    <property type="entry name" value="NDH1_NuoN_1"/>
    <property type="match status" value="1"/>
</dbReference>
<dbReference type="InterPro" id="IPR010096">
    <property type="entry name" value="NADH-Q_OxRdtase_suN/2"/>
</dbReference>
<dbReference type="InterPro" id="IPR001750">
    <property type="entry name" value="ND/Mrp_TM"/>
</dbReference>
<dbReference type="InterPro" id="IPR045693">
    <property type="entry name" value="Ndh2_N"/>
</dbReference>
<dbReference type="NCBIfam" id="TIGR01770">
    <property type="entry name" value="NDH_I_N"/>
    <property type="match status" value="1"/>
</dbReference>
<dbReference type="NCBIfam" id="NF002701">
    <property type="entry name" value="PRK02504.1"/>
    <property type="match status" value="1"/>
</dbReference>
<dbReference type="PANTHER" id="PTHR22773">
    <property type="entry name" value="NADH DEHYDROGENASE"/>
    <property type="match status" value="1"/>
</dbReference>
<dbReference type="Pfam" id="PF19530">
    <property type="entry name" value="Ndh2_N"/>
    <property type="match status" value="1"/>
</dbReference>
<dbReference type="Pfam" id="PF00361">
    <property type="entry name" value="Proton_antipo_M"/>
    <property type="match status" value="1"/>
</dbReference>
<dbReference type="PRINTS" id="PR01434">
    <property type="entry name" value="NADHDHGNASE5"/>
</dbReference>
<keyword id="KW-0150">Chloroplast</keyword>
<keyword id="KW-0472">Membrane</keyword>
<keyword id="KW-0520">NAD</keyword>
<keyword id="KW-0521">NADP</keyword>
<keyword id="KW-0934">Plastid</keyword>
<keyword id="KW-0618">Plastoquinone</keyword>
<keyword id="KW-0874">Quinone</keyword>
<keyword id="KW-1185">Reference proteome</keyword>
<keyword id="KW-0793">Thylakoid</keyword>
<keyword id="KW-1278">Translocase</keyword>
<keyword id="KW-0812">Transmembrane</keyword>
<keyword id="KW-1133">Transmembrane helix</keyword>
<keyword id="KW-0813">Transport</keyword>
<feature type="chain" id="PRO_0000391312" description="NAD(P)H-quinone oxidoreductase subunit 2 B, chloroplastic">
    <location>
        <begin position="1"/>
        <end position="510"/>
    </location>
</feature>
<feature type="transmembrane region" description="Helical" evidence="1">
    <location>
        <begin position="24"/>
        <end position="44"/>
    </location>
</feature>
<feature type="transmembrane region" description="Helical" evidence="1">
    <location>
        <begin position="57"/>
        <end position="77"/>
    </location>
</feature>
<feature type="transmembrane region" description="Helical" evidence="1">
    <location>
        <begin position="99"/>
        <end position="119"/>
    </location>
</feature>
<feature type="transmembrane region" description="Helical" evidence="1">
    <location>
        <begin position="124"/>
        <end position="144"/>
    </location>
</feature>
<feature type="transmembrane region" description="Helical" evidence="1">
    <location>
        <begin position="149"/>
        <end position="169"/>
    </location>
</feature>
<feature type="transmembrane region" description="Helical" evidence="1">
    <location>
        <begin position="183"/>
        <end position="203"/>
    </location>
</feature>
<feature type="transmembrane region" description="Helical" evidence="1">
    <location>
        <begin position="227"/>
        <end position="247"/>
    </location>
</feature>
<feature type="transmembrane region" description="Helical" evidence="1">
    <location>
        <begin position="295"/>
        <end position="315"/>
    </location>
</feature>
<feature type="transmembrane region" description="Helical" evidence="1">
    <location>
        <begin position="323"/>
        <end position="343"/>
    </location>
</feature>
<feature type="transmembrane region" description="Helical" evidence="1">
    <location>
        <begin position="354"/>
        <end position="374"/>
    </location>
</feature>
<feature type="transmembrane region" description="Helical" evidence="1">
    <location>
        <begin position="395"/>
        <end position="415"/>
    </location>
</feature>
<feature type="transmembrane region" description="Helical" evidence="1">
    <location>
        <begin position="418"/>
        <end position="438"/>
    </location>
</feature>
<feature type="transmembrane region" description="Helical" evidence="1">
    <location>
        <begin position="484"/>
        <end position="504"/>
    </location>
</feature>
<proteinExistence type="inferred from homology"/>
<reference key="1">
    <citation type="journal article" date="2006" name="Plant Cell Rep.">
        <title>The complete chloroplast genome sequences of Solanum tuberosum and comparative analysis with Solanaceae species identified the presence of a 241-bp deletion in cultivated potato chloroplast DNA sequence.</title>
        <authorList>
            <person name="Chung H.-J."/>
            <person name="Jung J.D."/>
            <person name="Park H.-W."/>
            <person name="Kim J.-H."/>
            <person name="Cha H.W."/>
            <person name="Min S.R."/>
            <person name="Jeong W.-J."/>
            <person name="Liu J.R."/>
        </authorList>
    </citation>
    <scope>NUCLEOTIDE SEQUENCE [LARGE SCALE GENOMIC DNA]</scope>
    <source>
        <strain>cv. Desiree</strain>
    </source>
</reference>
<reference key="2">
    <citation type="submission" date="2006-02" db="EMBL/GenBank/DDBJ databases">
        <title>Complete chloroplast genome sequences of Solanum tuberosum cultivar Desiree and comparative analyses with other Solanaceae genomes.</title>
        <authorList>
            <person name="Gargano D."/>
            <person name="Scotti N."/>
            <person name="Vezzi A."/>
            <person name="Bilardi A."/>
            <person name="Valle G."/>
            <person name="Grillo S."/>
            <person name="Cardi T."/>
        </authorList>
    </citation>
    <scope>NUCLEOTIDE SEQUENCE [LARGE SCALE GENOMIC DNA]</scope>
    <source>
        <strain>cv. Desiree</strain>
    </source>
</reference>
<organism>
    <name type="scientific">Solanum tuberosum</name>
    <name type="common">Potato</name>
    <dbReference type="NCBI Taxonomy" id="4113"/>
    <lineage>
        <taxon>Eukaryota</taxon>
        <taxon>Viridiplantae</taxon>
        <taxon>Streptophyta</taxon>
        <taxon>Embryophyta</taxon>
        <taxon>Tracheophyta</taxon>
        <taxon>Spermatophyta</taxon>
        <taxon>Magnoliopsida</taxon>
        <taxon>eudicotyledons</taxon>
        <taxon>Gunneridae</taxon>
        <taxon>Pentapetalae</taxon>
        <taxon>asterids</taxon>
        <taxon>lamiids</taxon>
        <taxon>Solanales</taxon>
        <taxon>Solanaceae</taxon>
        <taxon>Solanoideae</taxon>
        <taxon>Solaneae</taxon>
        <taxon>Solanum</taxon>
    </lineage>
</organism>
<comment type="function">
    <text evidence="1">NDH shuttles electrons from NAD(P)H:plastoquinone, via FMN and iron-sulfur (Fe-S) centers, to quinones in the photosynthetic chain and possibly in a chloroplast respiratory chain. The immediate electron acceptor for the enzyme in this species is believed to be plastoquinone. Couples the redox reaction to proton translocation, and thus conserves the redox energy in a proton gradient.</text>
</comment>
<comment type="catalytic activity">
    <reaction evidence="1">
        <text>a plastoquinone + NADH + (n+1) H(+)(in) = a plastoquinol + NAD(+) + n H(+)(out)</text>
        <dbReference type="Rhea" id="RHEA:42608"/>
        <dbReference type="Rhea" id="RHEA-COMP:9561"/>
        <dbReference type="Rhea" id="RHEA-COMP:9562"/>
        <dbReference type="ChEBI" id="CHEBI:15378"/>
        <dbReference type="ChEBI" id="CHEBI:17757"/>
        <dbReference type="ChEBI" id="CHEBI:57540"/>
        <dbReference type="ChEBI" id="CHEBI:57945"/>
        <dbReference type="ChEBI" id="CHEBI:62192"/>
    </reaction>
</comment>
<comment type="catalytic activity">
    <reaction evidence="1">
        <text>a plastoquinone + NADPH + (n+1) H(+)(in) = a plastoquinol + NADP(+) + n H(+)(out)</text>
        <dbReference type="Rhea" id="RHEA:42612"/>
        <dbReference type="Rhea" id="RHEA-COMP:9561"/>
        <dbReference type="Rhea" id="RHEA-COMP:9562"/>
        <dbReference type="ChEBI" id="CHEBI:15378"/>
        <dbReference type="ChEBI" id="CHEBI:17757"/>
        <dbReference type="ChEBI" id="CHEBI:57783"/>
        <dbReference type="ChEBI" id="CHEBI:58349"/>
        <dbReference type="ChEBI" id="CHEBI:62192"/>
    </reaction>
</comment>
<comment type="subunit">
    <text evidence="1">NDH is composed of at least 16 different subunits, 5 of which are encoded in the nucleus.</text>
</comment>
<comment type="subcellular location">
    <subcellularLocation>
        <location evidence="1">Plastid</location>
        <location evidence="1">Chloroplast thylakoid membrane</location>
        <topology evidence="1">Multi-pass membrane protein</topology>
    </subcellularLocation>
</comment>
<comment type="similarity">
    <text evidence="1">Belongs to the complex I subunit 2 family.</text>
</comment>
<gene>
    <name evidence="1" type="primary">ndhB2</name>
</gene>
<accession>P0CD49</accession>
<accession>Q27RY9</accession>
<accession>Q2VEC1</accession>
<evidence type="ECO:0000255" key="1">
    <source>
        <dbReference type="HAMAP-Rule" id="MF_00445"/>
    </source>
</evidence>
<name>NU2C2_SOLTU</name>
<protein>
    <recommendedName>
        <fullName evidence="1">NAD(P)H-quinone oxidoreductase subunit 2 B, chloroplastic</fullName>
        <ecNumber evidence="1">7.1.1.-</ecNumber>
    </recommendedName>
    <alternativeName>
        <fullName evidence="1">NAD(P)H dehydrogenase, subunit 2 B</fullName>
    </alternativeName>
    <alternativeName>
        <fullName evidence="1">NADH-plastoquinone oxidoreductase subunit 2 B</fullName>
    </alternativeName>
</protein>
<sequence length="510" mass="56627">MIWHVQNENFILDSTRIFMKAFHLLLFDGSLIFPECILIFGLILLLMIDSTSDQKDIPWLYFISSTSLVLSITALLFRWREEPMISFSGNFQTNNFNEIFQFLILLCSTLCIPLSVEYIECTEMAITEFLLFVLTATLGGMFLCGANDLITIFVAPECFSLCSYLLSGYTKKDVRSNEATMKYLLMGGASSSILVHGFSWLYGSSGGEIELQEIVNGLINTQMYNSPGISIALIFITVGIGFKLSPAPSHQWTPDVYEGSPTPVVAFLSVTSKVAASASATRIFDIPFYFSSNEWHLLLEILAILSMILGNLIAITQTSMKRMLAYSSIGQIGYVIIGIIVGDSNDGYASMITYMLFYISMNLGTFACIVLFGLRTGTDNIRDYAGLYTKDPFLALSLALCLLSLGGLPPLAGFFGKLYLFWCGWQAGLYFLVLIGLLTSVVSIYYYLKIIKLLMTGRNQEITPHVRNYRRSPLRSNNSIELSMIVCVIASTIPGISMNPIIAIAQDSLF</sequence>